<accession>Q8G700</accession>
<keyword id="KW-0067">ATP-binding</keyword>
<keyword id="KW-0436">Ligase</keyword>
<keyword id="KW-0547">Nucleotide-binding</keyword>
<keyword id="KW-0554">One-carbon metabolism</keyword>
<keyword id="KW-1185">Reference proteome</keyword>
<comment type="catalytic activity">
    <reaction>
        <text>(6S)-5,6,7,8-tetrahydrofolate + formate + ATP = (6R)-10-formyltetrahydrofolate + ADP + phosphate</text>
        <dbReference type="Rhea" id="RHEA:20221"/>
        <dbReference type="ChEBI" id="CHEBI:15740"/>
        <dbReference type="ChEBI" id="CHEBI:30616"/>
        <dbReference type="ChEBI" id="CHEBI:43474"/>
        <dbReference type="ChEBI" id="CHEBI:57453"/>
        <dbReference type="ChEBI" id="CHEBI:195366"/>
        <dbReference type="ChEBI" id="CHEBI:456216"/>
        <dbReference type="EC" id="6.3.4.3"/>
    </reaction>
</comment>
<comment type="pathway">
    <text>One-carbon metabolism; tetrahydrofolate interconversion.</text>
</comment>
<comment type="similarity">
    <text evidence="1">Belongs to the formate--tetrahydrofolate ligase family.</text>
</comment>
<gene>
    <name type="primary">fhs</name>
    <name type="ordered locus">BL0478</name>
</gene>
<organism>
    <name type="scientific">Bifidobacterium longum (strain NCC 2705)</name>
    <dbReference type="NCBI Taxonomy" id="206672"/>
    <lineage>
        <taxon>Bacteria</taxon>
        <taxon>Bacillati</taxon>
        <taxon>Actinomycetota</taxon>
        <taxon>Actinomycetes</taxon>
        <taxon>Bifidobacteriales</taxon>
        <taxon>Bifidobacteriaceae</taxon>
        <taxon>Bifidobacterium</taxon>
    </lineage>
</organism>
<evidence type="ECO:0000305" key="1"/>
<sequence>MTTIEDFTSQYGLVQKIDAFGYMKYLAENPDAPRKHGKVVLVTADTPLKASRGEGKTTTTIALIDALNKRGIDATAVLRQPSMGITAAGSKGGASGGGKASLTHPELIDWGLCGEMGAIEAAQNLLVSFAEKAIDDGKLDTILVPRVSEVPSRSLRSTAVDYGKGNVPEKVVLTPTCELMQIVVLSRSMDEISERVSKMIAGTKDGKAVTFGEFVDLWRITGILADAVKPAKTETVNGSPVYVHGGPFANVSIGIPTLVSVEMACALHDVVIVEAGYGTDAGAQKWLDIACREYGAQWPSAAIVVTRASTWRDDPELAWRYPFHVQRLENLDIPTFPLINLWEGEDDQVPSLKATADELGFRTPIIGNLFRDGGEALAPQLDGFVDALQNGSMPAEPHSHKGMALTENAKWVAENAYGVPAERVIYKPGFTESVSEAMELCQSAGISLDDLAFVAVKSPATMTDNDRAPEEERTVALKKVEVHAGAGLVHVNLTTSLTTPMPKIV</sequence>
<protein>
    <recommendedName>
        <fullName>Formate--tetrahydrofolate ligase</fullName>
        <ecNumber>6.3.4.3</ecNumber>
    </recommendedName>
    <alternativeName>
        <fullName>Formyltetrahydrofolate synthetase</fullName>
        <shortName>FHS</shortName>
        <shortName>FTHFS</shortName>
    </alternativeName>
</protein>
<name>FTHS_BIFLO</name>
<dbReference type="EC" id="6.3.4.3"/>
<dbReference type="EMBL" id="AE014295">
    <property type="protein sequence ID" value="AAN24309.1"/>
    <property type="molecule type" value="Genomic_DNA"/>
</dbReference>
<dbReference type="RefSeq" id="NP_695673.1">
    <property type="nucleotide sequence ID" value="NC_004307.2"/>
</dbReference>
<dbReference type="RefSeq" id="WP_011068506.1">
    <property type="nucleotide sequence ID" value="NC_004307.2"/>
</dbReference>
<dbReference type="SMR" id="Q8G700"/>
<dbReference type="STRING" id="206672.BL0478"/>
<dbReference type="EnsemblBacteria" id="AAN24309">
    <property type="protein sequence ID" value="AAN24309"/>
    <property type="gene ID" value="BL0478"/>
</dbReference>
<dbReference type="KEGG" id="blo:BL0478"/>
<dbReference type="PATRIC" id="fig|206672.9.peg.1221"/>
<dbReference type="HOGENOM" id="CLU_030416_0_0_11"/>
<dbReference type="OrthoDB" id="9761733at2"/>
<dbReference type="PhylomeDB" id="Q8G700"/>
<dbReference type="UniPathway" id="UPA00193"/>
<dbReference type="Proteomes" id="UP000000439">
    <property type="component" value="Chromosome"/>
</dbReference>
<dbReference type="GO" id="GO:0005524">
    <property type="term" value="F:ATP binding"/>
    <property type="evidence" value="ECO:0007669"/>
    <property type="project" value="UniProtKB-KW"/>
</dbReference>
<dbReference type="GO" id="GO:0004329">
    <property type="term" value="F:formate-tetrahydrofolate ligase activity"/>
    <property type="evidence" value="ECO:0007669"/>
    <property type="project" value="UniProtKB-EC"/>
</dbReference>
<dbReference type="GO" id="GO:0035999">
    <property type="term" value="P:tetrahydrofolate interconversion"/>
    <property type="evidence" value="ECO:0007669"/>
    <property type="project" value="UniProtKB-UniPathway"/>
</dbReference>
<dbReference type="Gene3D" id="3.30.1510.10">
    <property type="entry name" value="Domain 2, N(10)-formyltetrahydrofolate synthetase"/>
    <property type="match status" value="1"/>
</dbReference>
<dbReference type="Gene3D" id="3.40.50.300">
    <property type="entry name" value="P-loop containing nucleotide triphosphate hydrolases"/>
    <property type="match status" value="1"/>
</dbReference>
<dbReference type="InterPro" id="IPR000559">
    <property type="entry name" value="Formate_THF_ligase"/>
</dbReference>
<dbReference type="InterPro" id="IPR020628">
    <property type="entry name" value="Formate_THF_ligase_CS"/>
</dbReference>
<dbReference type="InterPro" id="IPR027417">
    <property type="entry name" value="P-loop_NTPase"/>
</dbReference>
<dbReference type="Pfam" id="PF01268">
    <property type="entry name" value="FTHFS"/>
    <property type="match status" value="1"/>
</dbReference>
<dbReference type="SUPFAM" id="SSF52540">
    <property type="entry name" value="P-loop containing nucleoside triphosphate hydrolases"/>
    <property type="match status" value="1"/>
</dbReference>
<dbReference type="PROSITE" id="PS00721">
    <property type="entry name" value="FTHFS_1"/>
    <property type="match status" value="1"/>
</dbReference>
<feature type="chain" id="PRO_0000199336" description="Formate--tetrahydrofolate ligase">
    <location>
        <begin position="1"/>
        <end position="505"/>
    </location>
</feature>
<proteinExistence type="inferred from homology"/>
<reference key="1">
    <citation type="journal article" date="2002" name="Proc. Natl. Acad. Sci. U.S.A.">
        <title>The genome sequence of Bifidobacterium longum reflects its adaptation to the human gastrointestinal tract.</title>
        <authorList>
            <person name="Schell M.A."/>
            <person name="Karmirantzou M."/>
            <person name="Snel B."/>
            <person name="Vilanova D."/>
            <person name="Berger B."/>
            <person name="Pessi G."/>
            <person name="Zwahlen M.-C."/>
            <person name="Desiere F."/>
            <person name="Bork P."/>
            <person name="Delley M."/>
            <person name="Pridmore R.D."/>
            <person name="Arigoni F."/>
        </authorList>
    </citation>
    <scope>NUCLEOTIDE SEQUENCE [LARGE SCALE GENOMIC DNA]</scope>
    <source>
        <strain>NCC 2705</strain>
    </source>
</reference>